<accession>P22537</accession>
<protein>
    <recommendedName>
        <fullName>Nodulation protein NolA</fullName>
    </recommendedName>
</protein>
<organism>
    <name type="scientific">Bradyrhizobium diazoefficiens (strain JCM 10833 / BCRC 13528 / IAM 13628 / NBRC 14792 / USDA 110)</name>
    <dbReference type="NCBI Taxonomy" id="224911"/>
    <lineage>
        <taxon>Bacteria</taxon>
        <taxon>Pseudomonadati</taxon>
        <taxon>Pseudomonadota</taxon>
        <taxon>Alphaproteobacteria</taxon>
        <taxon>Hyphomicrobiales</taxon>
        <taxon>Nitrobacteraceae</taxon>
        <taxon>Bradyrhizobium</taxon>
    </lineage>
</organism>
<evidence type="ECO:0000255" key="1">
    <source>
        <dbReference type="PROSITE-ProRule" id="PRU00254"/>
    </source>
</evidence>
<evidence type="ECO:0000305" key="2"/>
<gene>
    <name type="primary">nolA</name>
    <name type="ordered locus">bll2019</name>
</gene>
<name>NOLA_BRADU</name>
<reference key="1">
    <citation type="journal article" date="1991" name="Proc. Natl. Acad. Sci. U.S.A.">
        <title>The Bradyrhizobium japonicum nolA gene and its involvement in the genotype-specific nodulation of soybeans.</title>
        <authorList>
            <person name="Sadowsky M.J."/>
            <person name="Cregan P.B."/>
            <person name="Goettfert M."/>
            <person name="Sharma A."/>
            <person name="Gerhold D."/>
            <person name="Rodriguez-Quinones F."/>
            <person name="Keyser H.H."/>
            <person name="Hennecke H."/>
            <person name="Stacey G."/>
        </authorList>
    </citation>
    <scope>NUCLEOTIDE SEQUENCE [GENOMIC DNA]</scope>
    <source>
        <strain>JCM 10833 / BCRC 13528 / IAM 13628 / NBRC 14792 / USDA 110</strain>
    </source>
</reference>
<reference key="2">
    <citation type="journal article" date="2001" name="J. Bacteriol.">
        <title>Potential symbiosis-specific genes uncovered by sequencing a 410-kb DNA region of the Bradyrhizobium japonicum chromosome.</title>
        <authorList>
            <person name="Goettfert M."/>
            <person name="Roethlisberger S."/>
            <person name="Kuendig C."/>
            <person name="Beck C."/>
            <person name="Marty R."/>
            <person name="Hennecke H."/>
        </authorList>
    </citation>
    <scope>NUCLEOTIDE SEQUENCE [GENOMIC DNA]</scope>
    <source>
        <strain>USDA 110spc4</strain>
    </source>
</reference>
<reference key="3">
    <citation type="journal article" date="2002" name="DNA Res.">
        <title>Complete genomic sequence of nitrogen-fixing symbiotic bacterium Bradyrhizobium japonicum USDA110.</title>
        <authorList>
            <person name="Kaneko T."/>
            <person name="Nakamura Y."/>
            <person name="Sato S."/>
            <person name="Minamisawa K."/>
            <person name="Uchiumi T."/>
            <person name="Sasamoto S."/>
            <person name="Watanabe A."/>
            <person name="Idesawa K."/>
            <person name="Iriguchi M."/>
            <person name="Kawashima K."/>
            <person name="Kohara M."/>
            <person name="Matsumoto M."/>
            <person name="Shimpo S."/>
            <person name="Tsuruoka H."/>
            <person name="Wada T."/>
            <person name="Yamada M."/>
            <person name="Tabata S."/>
        </authorList>
    </citation>
    <scope>NUCLEOTIDE SEQUENCE [LARGE SCALE GENOMIC DNA]</scope>
    <source>
        <strain>JCM 10833 / BCRC 13528 / IAM 13628 / NBRC 14792 / USDA 110</strain>
    </source>
</reference>
<proteinExistence type="evidence at transcript level"/>
<sequence length="237" mass="26872">MNRATPRRRRWRIGELAEATGVTVRTLHHYEHTGLLAATERTEGGHRMYDRESGQRVHQIRALRELGFSLVEIRKAMEGTTSLTDLLRKHLERIEVQVARTTLLRDRLRNMTIDSEAQVSVDELPATLNAMSRAETRSQTSRCTCNLAAEREDRWRRIRDDLRDCMDGGEHPCGERAKAVAVAARLLISEIAGDDSRVSMILKVLARLSAPRSLAGWDPCLMQYLDLALGGLEDQPY</sequence>
<dbReference type="EMBL" id="M58360">
    <property type="protein sequence ID" value="AAA26237.1"/>
    <property type="molecule type" value="Genomic_DNA"/>
</dbReference>
<dbReference type="EMBL" id="AH010242">
    <property type="protein sequence ID" value="AAG60990.1"/>
    <property type="molecule type" value="Genomic_DNA"/>
</dbReference>
<dbReference type="EMBL" id="BA000040">
    <property type="protein sequence ID" value="BAC47284.1"/>
    <property type="status" value="ALT_INIT"/>
    <property type="molecule type" value="Genomic_DNA"/>
</dbReference>
<dbReference type="PIR" id="A39017">
    <property type="entry name" value="A39017"/>
</dbReference>
<dbReference type="RefSeq" id="NP_768659.1">
    <property type="nucleotide sequence ID" value="NC_004463.1"/>
</dbReference>
<dbReference type="SMR" id="P22537"/>
<dbReference type="STRING" id="224911.AAV28_06930"/>
<dbReference type="EnsemblBacteria" id="BAC47284">
    <property type="protein sequence ID" value="BAC47284"/>
    <property type="gene ID" value="BAC47284"/>
</dbReference>
<dbReference type="KEGG" id="bja:bll2019"/>
<dbReference type="eggNOG" id="COG0789">
    <property type="taxonomic scope" value="Bacteria"/>
</dbReference>
<dbReference type="HOGENOM" id="CLU_1286727_0_0_5"/>
<dbReference type="InParanoid" id="P22537"/>
<dbReference type="OrthoDB" id="9802944at2"/>
<dbReference type="Proteomes" id="UP000002526">
    <property type="component" value="Chromosome"/>
</dbReference>
<dbReference type="GO" id="GO:0003677">
    <property type="term" value="F:DNA binding"/>
    <property type="evidence" value="ECO:0007669"/>
    <property type="project" value="UniProtKB-KW"/>
</dbReference>
<dbReference type="GO" id="GO:0003700">
    <property type="term" value="F:DNA-binding transcription factor activity"/>
    <property type="evidence" value="ECO:0000318"/>
    <property type="project" value="GO_Central"/>
</dbReference>
<dbReference type="GO" id="GO:0009399">
    <property type="term" value="P:nitrogen fixation"/>
    <property type="evidence" value="ECO:0007669"/>
    <property type="project" value="UniProtKB-KW"/>
</dbReference>
<dbReference type="GO" id="GO:0006355">
    <property type="term" value="P:regulation of DNA-templated transcription"/>
    <property type="evidence" value="ECO:0000318"/>
    <property type="project" value="GO_Central"/>
</dbReference>
<dbReference type="Gene3D" id="1.10.1660.10">
    <property type="match status" value="1"/>
</dbReference>
<dbReference type="InterPro" id="IPR009061">
    <property type="entry name" value="DNA-bd_dom_put_sf"/>
</dbReference>
<dbReference type="InterPro" id="IPR000551">
    <property type="entry name" value="MerR-type_HTH_dom"/>
</dbReference>
<dbReference type="InterPro" id="IPR047057">
    <property type="entry name" value="MerR_fam"/>
</dbReference>
<dbReference type="PANTHER" id="PTHR30204:SF90">
    <property type="entry name" value="HTH-TYPE TRANSCRIPTIONAL ACTIVATOR MTA"/>
    <property type="match status" value="1"/>
</dbReference>
<dbReference type="PANTHER" id="PTHR30204">
    <property type="entry name" value="REDOX-CYCLING DRUG-SENSING TRANSCRIPTIONAL ACTIVATOR SOXR"/>
    <property type="match status" value="1"/>
</dbReference>
<dbReference type="Pfam" id="PF13411">
    <property type="entry name" value="MerR_1"/>
    <property type="match status" value="1"/>
</dbReference>
<dbReference type="PRINTS" id="PR00040">
    <property type="entry name" value="HTHMERR"/>
</dbReference>
<dbReference type="SMART" id="SM00422">
    <property type="entry name" value="HTH_MERR"/>
    <property type="match status" value="1"/>
</dbReference>
<dbReference type="SUPFAM" id="SSF46955">
    <property type="entry name" value="Putative DNA-binding domain"/>
    <property type="match status" value="1"/>
</dbReference>
<dbReference type="PROSITE" id="PS00552">
    <property type="entry name" value="HTH_MERR_1"/>
    <property type="match status" value="1"/>
</dbReference>
<dbReference type="PROSITE" id="PS50937">
    <property type="entry name" value="HTH_MERR_2"/>
    <property type="match status" value="1"/>
</dbReference>
<comment type="function">
    <text>Involved in genotype-specific nodulation of soybeans.</text>
</comment>
<comment type="induction">
    <text>By the isoflavone genistein.</text>
</comment>
<comment type="sequence caution" evidence="2">
    <conflict type="erroneous initiation">
        <sequence resource="EMBL-CDS" id="BAC47284"/>
    </conflict>
</comment>
<keyword id="KW-0238">DNA-binding</keyword>
<keyword id="KW-0535">Nitrogen fixation</keyword>
<keyword id="KW-0536">Nodulation</keyword>
<keyword id="KW-1185">Reference proteome</keyword>
<feature type="chain" id="PRO_0000098147" description="Nodulation protein NolA">
    <location>
        <begin position="1"/>
        <end position="237"/>
    </location>
</feature>
<feature type="domain" description="HTH merR-type" evidence="1">
    <location>
        <begin position="10"/>
        <end position="79"/>
    </location>
</feature>
<feature type="DNA-binding region" description="H-T-H motif" evidence="1">
    <location>
        <begin position="13"/>
        <end position="32"/>
    </location>
</feature>